<organism>
    <name type="scientific">Escherichia coli (strain K12)</name>
    <dbReference type="NCBI Taxonomy" id="83333"/>
    <lineage>
        <taxon>Bacteria</taxon>
        <taxon>Pseudomonadati</taxon>
        <taxon>Pseudomonadota</taxon>
        <taxon>Gammaproteobacteria</taxon>
        <taxon>Enterobacterales</taxon>
        <taxon>Enterobacteriaceae</taxon>
        <taxon>Escherichia</taxon>
    </lineage>
</organism>
<evidence type="ECO:0000269" key="1">
    <source>
    </source>
</evidence>
<evidence type="ECO:0000269" key="2">
    <source>
    </source>
</evidence>
<evidence type="ECO:0000269" key="3">
    <source>
    </source>
</evidence>
<evidence type="ECO:0000305" key="4"/>
<evidence type="ECO:0000305" key="5">
    <source>
    </source>
</evidence>
<evidence type="ECO:0007829" key="6">
    <source>
        <dbReference type="PDB" id="4P3V"/>
    </source>
</evidence>
<feature type="chain" id="PRO_0000104939" description="DNA-binding protein HU-beta">
    <location>
        <begin position="1"/>
        <end position="90"/>
    </location>
</feature>
<feature type="mutagenesis site" description="No effect." evidence="1">
    <original>A</original>
    <variation>D</variation>
    <location>
        <position position="30"/>
    </location>
</feature>
<feature type="mutagenesis site" description="No effect." evidence="1">
    <original>K</original>
    <variation>Q</variation>
    <location>
        <position position="37"/>
    </location>
</feature>
<feature type="mutagenesis site" description="Reduced DNA-binding." evidence="1">
    <original>F</original>
    <variation>T</variation>
    <location>
        <position position="47"/>
    </location>
</feature>
<feature type="mutagenesis site" description="Reduced DNA-binding." evidence="1">
    <original>RTGR</original>
    <variation>GTGG</variation>
    <location>
        <begin position="58"/>
        <end position="61"/>
    </location>
</feature>
<feature type="sequence conflict" description="In Ref. 7; AA sequence." evidence="4" ref="7">
    <original>A</original>
    <variation>E</variation>
    <location>
        <position position="12"/>
    </location>
</feature>
<feature type="sequence conflict" description="In Ref. 7; AA sequence." evidence="4" ref="7">
    <original>I</original>
    <variation>L</variation>
    <location>
        <position position="16"/>
    </location>
</feature>
<feature type="sequence conflict" description="In Ref. 7; AA sequence." evidence="4" ref="7">
    <original>D</original>
    <variation>E</variation>
    <location>
        <position position="26"/>
    </location>
</feature>
<feature type="helix" evidence="6">
    <location>
        <begin position="3"/>
        <end position="14"/>
    </location>
</feature>
<feature type="helix" evidence="6">
    <location>
        <begin position="18"/>
        <end position="37"/>
    </location>
</feature>
<feature type="strand" evidence="6">
    <location>
        <begin position="42"/>
        <end position="44"/>
    </location>
</feature>
<feature type="turn" evidence="6">
    <location>
        <begin position="45"/>
        <end position="47"/>
    </location>
</feature>
<feature type="strand" evidence="6">
    <location>
        <begin position="48"/>
        <end position="54"/>
    </location>
</feature>
<feature type="strand" evidence="6">
    <location>
        <begin position="75"/>
        <end position="81"/>
    </location>
</feature>
<feature type="helix" evidence="6">
    <location>
        <begin position="83"/>
        <end position="88"/>
    </location>
</feature>
<dbReference type="EMBL" id="X16540">
    <property type="protein sequence ID" value="CAA34539.1"/>
    <property type="molecule type" value="Genomic_DNA"/>
</dbReference>
<dbReference type="EMBL" id="U82664">
    <property type="protein sequence ID" value="AAB40196.1"/>
    <property type="molecule type" value="Genomic_DNA"/>
</dbReference>
<dbReference type="EMBL" id="U00096">
    <property type="protein sequence ID" value="AAC73543.1"/>
    <property type="molecule type" value="Genomic_DNA"/>
</dbReference>
<dbReference type="EMBL" id="AP009048">
    <property type="protein sequence ID" value="BAE76220.1"/>
    <property type="molecule type" value="Genomic_DNA"/>
</dbReference>
<dbReference type="EMBL" id="X53241">
    <property type="protein sequence ID" value="CAA37332.1"/>
    <property type="molecule type" value="Genomic_DNA"/>
</dbReference>
<dbReference type="EMBL" id="D82943">
    <property type="protein sequence ID" value="BAA11644.1"/>
    <property type="molecule type" value="Genomic_DNA"/>
</dbReference>
<dbReference type="PIR" id="S06880">
    <property type="entry name" value="DNECS1"/>
</dbReference>
<dbReference type="RefSeq" id="NP_414974.1">
    <property type="nucleotide sequence ID" value="NC_000913.3"/>
</dbReference>
<dbReference type="RefSeq" id="WP_001043542.1">
    <property type="nucleotide sequence ID" value="NZ_CP047127.1"/>
</dbReference>
<dbReference type="PDB" id="2O97">
    <property type="method" value="X-ray"/>
    <property type="resolution" value="2.45 A"/>
    <property type="chains" value="B=1-90"/>
</dbReference>
<dbReference type="PDB" id="4P3V">
    <property type="method" value="X-ray"/>
    <property type="resolution" value="1.25 A"/>
    <property type="chains" value="A=1-90"/>
</dbReference>
<dbReference type="PDB" id="4YEW">
    <property type="method" value="X-ray"/>
    <property type="resolution" value="2.68 A"/>
    <property type="chains" value="A=1-90"/>
</dbReference>
<dbReference type="PDB" id="4YFT">
    <property type="method" value="X-ray"/>
    <property type="resolution" value="2.91 A"/>
    <property type="chains" value="A=1-90"/>
</dbReference>
<dbReference type="PDBsum" id="2O97"/>
<dbReference type="PDBsum" id="4P3V"/>
<dbReference type="PDBsum" id="4YEW"/>
<dbReference type="PDBsum" id="4YFT"/>
<dbReference type="BMRB" id="P0ACF4"/>
<dbReference type="SMR" id="P0ACF4"/>
<dbReference type="BioGRID" id="4260733">
    <property type="interactions" value="156"/>
</dbReference>
<dbReference type="BioGRID" id="853335">
    <property type="interactions" value="4"/>
</dbReference>
<dbReference type="ComplexPortal" id="CPX-1958">
    <property type="entry name" value="HU complex, variant hupAB"/>
</dbReference>
<dbReference type="ComplexPortal" id="CPX-1960">
    <property type="entry name" value="HU complex variant 2"/>
</dbReference>
<dbReference type="ComplexPortal" id="CPX-1961">
    <property type="entry name" value="DnaA-HU complex, variant hupAB"/>
</dbReference>
<dbReference type="DIP" id="DIP-31833N"/>
<dbReference type="FunCoup" id="P0ACF4">
    <property type="interactions" value="599"/>
</dbReference>
<dbReference type="IntAct" id="P0ACF4">
    <property type="interactions" value="77"/>
</dbReference>
<dbReference type="STRING" id="511145.b0440"/>
<dbReference type="jPOST" id="P0ACF4"/>
<dbReference type="PaxDb" id="511145-b0440"/>
<dbReference type="EnsemblBacteria" id="AAC73543">
    <property type="protein sequence ID" value="AAC73543"/>
    <property type="gene ID" value="b0440"/>
</dbReference>
<dbReference type="GeneID" id="89519777"/>
<dbReference type="GeneID" id="949095"/>
<dbReference type="KEGG" id="ecj:JW0430"/>
<dbReference type="KEGG" id="eco:b0440"/>
<dbReference type="KEGG" id="ecoc:C3026_02155"/>
<dbReference type="PATRIC" id="fig|1411691.4.peg.1836"/>
<dbReference type="EchoBASE" id="EB0462"/>
<dbReference type="eggNOG" id="COG0776">
    <property type="taxonomic scope" value="Bacteria"/>
</dbReference>
<dbReference type="HOGENOM" id="CLU_105066_3_2_6"/>
<dbReference type="InParanoid" id="P0ACF4"/>
<dbReference type="OMA" id="AFSAGKM"/>
<dbReference type="OrthoDB" id="9799835at2"/>
<dbReference type="PhylomeDB" id="P0ACF4"/>
<dbReference type="BioCyc" id="EcoCyc:EG10467-MONOMER"/>
<dbReference type="EvolutionaryTrace" id="P0ACF4"/>
<dbReference type="PRO" id="PR:P0ACF4"/>
<dbReference type="Proteomes" id="UP000000625">
    <property type="component" value="Chromosome"/>
</dbReference>
<dbReference type="GO" id="GO:0005829">
    <property type="term" value="C:cytosol"/>
    <property type="evidence" value="ECO:0000314"/>
    <property type="project" value="EcoCyc"/>
</dbReference>
<dbReference type="GO" id="GO:1990103">
    <property type="term" value="C:DnaA-HU complex"/>
    <property type="evidence" value="ECO:0000353"/>
    <property type="project" value="ComplexPortal"/>
</dbReference>
<dbReference type="GO" id="GO:1990178">
    <property type="term" value="C:HU-DNA complex"/>
    <property type="evidence" value="ECO:0000353"/>
    <property type="project" value="ComplexPortal"/>
</dbReference>
<dbReference type="GO" id="GO:0003677">
    <property type="term" value="F:DNA binding"/>
    <property type="evidence" value="ECO:0007669"/>
    <property type="project" value="UniProtKB-KW"/>
</dbReference>
<dbReference type="GO" id="GO:0042802">
    <property type="term" value="F:identical protein binding"/>
    <property type="evidence" value="ECO:0000353"/>
    <property type="project" value="IntAct"/>
</dbReference>
<dbReference type="GO" id="GO:0030527">
    <property type="term" value="F:structural constituent of chromatin"/>
    <property type="evidence" value="ECO:0007669"/>
    <property type="project" value="InterPro"/>
</dbReference>
<dbReference type="GO" id="GO:0036386">
    <property type="term" value="P:bacterial nucleoid packaging"/>
    <property type="evidence" value="ECO:0000303"/>
    <property type="project" value="ComplexPortal"/>
</dbReference>
<dbReference type="GO" id="GO:0030261">
    <property type="term" value="P:chromosome condensation"/>
    <property type="evidence" value="ECO:0007669"/>
    <property type="project" value="UniProtKB-KW"/>
</dbReference>
<dbReference type="GO" id="GO:0006281">
    <property type="term" value="P:DNA repair"/>
    <property type="evidence" value="ECO:0000303"/>
    <property type="project" value="ComplexPortal"/>
</dbReference>
<dbReference type="GO" id="GO:0006270">
    <property type="term" value="P:DNA replication initiation"/>
    <property type="evidence" value="ECO:0000314"/>
    <property type="project" value="ComplexPortal"/>
</dbReference>
<dbReference type="GO" id="GO:0006351">
    <property type="term" value="P:DNA-templated transcription"/>
    <property type="evidence" value="ECO:0000314"/>
    <property type="project" value="EcoCyc"/>
</dbReference>
<dbReference type="CDD" id="cd13831">
    <property type="entry name" value="HU"/>
    <property type="match status" value="1"/>
</dbReference>
<dbReference type="FunFam" id="4.10.520.10:FF:000001">
    <property type="entry name" value="DNA-binding protein HU"/>
    <property type="match status" value="1"/>
</dbReference>
<dbReference type="Gene3D" id="4.10.520.10">
    <property type="entry name" value="IHF-like DNA-binding proteins"/>
    <property type="match status" value="1"/>
</dbReference>
<dbReference type="InterPro" id="IPR000119">
    <property type="entry name" value="Hist_DNA-bd"/>
</dbReference>
<dbReference type="InterPro" id="IPR020816">
    <property type="entry name" value="Histone-like_DNA-bd_CS"/>
</dbReference>
<dbReference type="InterPro" id="IPR010992">
    <property type="entry name" value="IHF-like_DNA-bd_dom_sf"/>
</dbReference>
<dbReference type="NCBIfam" id="NF007945">
    <property type="entry name" value="PRK10664.1"/>
    <property type="match status" value="1"/>
</dbReference>
<dbReference type="PANTHER" id="PTHR33175">
    <property type="entry name" value="DNA-BINDING PROTEIN HU"/>
    <property type="match status" value="1"/>
</dbReference>
<dbReference type="PANTHER" id="PTHR33175:SF3">
    <property type="entry name" value="DNA-BINDING PROTEIN HU-BETA"/>
    <property type="match status" value="1"/>
</dbReference>
<dbReference type="Pfam" id="PF00216">
    <property type="entry name" value="Bac_DNA_binding"/>
    <property type="match status" value="1"/>
</dbReference>
<dbReference type="PRINTS" id="PR01727">
    <property type="entry name" value="DNABINDINGHU"/>
</dbReference>
<dbReference type="SMART" id="SM00411">
    <property type="entry name" value="BHL"/>
    <property type="match status" value="1"/>
</dbReference>
<dbReference type="SUPFAM" id="SSF47729">
    <property type="entry name" value="IHF-like DNA-binding proteins"/>
    <property type="match status" value="1"/>
</dbReference>
<dbReference type="PROSITE" id="PS00045">
    <property type="entry name" value="HISTONE_LIKE"/>
    <property type="match status" value="1"/>
</dbReference>
<keyword id="KW-0002">3D-structure</keyword>
<keyword id="KW-0903">Direct protein sequencing</keyword>
<keyword id="KW-0226">DNA condensation</keyword>
<keyword id="KW-0238">DNA-binding</keyword>
<keyword id="KW-1185">Reference proteome</keyword>
<proteinExistence type="evidence at protein level"/>
<comment type="function">
    <text evidence="5">Histone-like DNA-binding protein which is capable of wrapping DNA to stabilize it, and thus to prevent its denaturation under extreme environmental conditions.</text>
</comment>
<comment type="activity regulation">
    <text evidence="3">Trans-stilbene derivative 4,4'-[(E)-ethene-1,2 diylbis({5[(phenylcarbonyl)amino]benzene-2,1-diyl}sulfonylimino)] dibenzoic acid (SD1) inhibits DNA binding at 50uM. However SD1 did not inhibit growth in a range of 3-1600 uM.</text>
</comment>
<comment type="subunit">
    <text evidence="2">Heterodimer of an alpha and a beta chain.</text>
</comment>
<comment type="interaction">
    <interactant intactId="EBI-370411">
        <id>P0ACF4</id>
    </interactant>
    <interactant intactId="EBI-547648">
        <id>P0ACF0</id>
        <label>hupA</label>
    </interactant>
    <organismsDiffer>false</organismsDiffer>
    <experiments>9</experiments>
</comment>
<comment type="interaction">
    <interactant intactId="EBI-370411">
        <id>P0ACF4</id>
    </interactant>
    <interactant intactId="EBI-370411">
        <id>P0ACF4</id>
        <label>hupB</label>
    </interactant>
    <organismsDiffer>false</organismsDiffer>
    <experiments>2</experiments>
</comment>
<comment type="similarity">
    <text evidence="4">Belongs to the bacterial histone-like protein family.</text>
</comment>
<protein>
    <recommendedName>
        <fullName>DNA-binding protein HU-beta</fullName>
    </recommendedName>
    <alternativeName>
        <fullName>HU-1</fullName>
    </alternativeName>
    <alternativeName>
        <fullName>NS1</fullName>
    </alternativeName>
</protein>
<sequence length="90" mass="9226">MNKSQLIDKIAAGADISKAAAGRALDAIIASVTESLKEGDDVALVGFGTFAVKERAARTGRNPQTGKEITIAAAKVPSFRAGKALKDAVN</sequence>
<reference key="1">
    <citation type="journal article" date="1985" name="Mol. Gen. Genet.">
        <title>Molecular cloning and nucleotide sequence of the HU-1 gene of Escherichia coli.</title>
        <authorList>
            <person name="Kano Y."/>
            <person name="Yoshimno S."/>
            <person name="Wada M."/>
            <person name="Yokoyama K."/>
            <person name="Nobuhara M."/>
            <person name="Imamoto F."/>
        </authorList>
    </citation>
    <scope>NUCLEOTIDE SEQUENCE [GENOMIC DNA]</scope>
    <source>
        <strain>K12</strain>
    </source>
</reference>
<reference key="2">
    <citation type="submission" date="1997-01" db="EMBL/GenBank/DDBJ databases">
        <title>Sequence of minutes 4-25 of Escherichia coli.</title>
        <authorList>
            <person name="Chung E."/>
            <person name="Allen E."/>
            <person name="Araujo R."/>
            <person name="Aparicio A.M."/>
            <person name="Davis K."/>
            <person name="Duncan M."/>
            <person name="Federspiel N."/>
            <person name="Hyman R."/>
            <person name="Kalman S."/>
            <person name="Komp C."/>
            <person name="Kurdi O."/>
            <person name="Lew H."/>
            <person name="Lin D."/>
            <person name="Namath A."/>
            <person name="Oefner P."/>
            <person name="Roberts D."/>
            <person name="Schramm S."/>
            <person name="Davis R.W."/>
        </authorList>
    </citation>
    <scope>NUCLEOTIDE SEQUENCE [LARGE SCALE GENOMIC DNA]</scope>
    <source>
        <strain>K12 / MG1655 / ATCC 47076</strain>
    </source>
</reference>
<reference key="3">
    <citation type="journal article" date="1997" name="Science">
        <title>The complete genome sequence of Escherichia coli K-12.</title>
        <authorList>
            <person name="Blattner F.R."/>
            <person name="Plunkett G. III"/>
            <person name="Bloch C.A."/>
            <person name="Perna N.T."/>
            <person name="Burland V."/>
            <person name="Riley M."/>
            <person name="Collado-Vides J."/>
            <person name="Glasner J.D."/>
            <person name="Rode C.K."/>
            <person name="Mayhew G.F."/>
            <person name="Gregor J."/>
            <person name="Davis N.W."/>
            <person name="Kirkpatrick H.A."/>
            <person name="Goeden M.A."/>
            <person name="Rose D.J."/>
            <person name="Mau B."/>
            <person name="Shao Y."/>
        </authorList>
    </citation>
    <scope>NUCLEOTIDE SEQUENCE [LARGE SCALE GENOMIC DNA]</scope>
    <source>
        <strain>K12 / MG1655 / ATCC 47076</strain>
    </source>
</reference>
<reference key="4">
    <citation type="journal article" date="2006" name="Mol. Syst. Biol.">
        <title>Highly accurate genome sequences of Escherichia coli K-12 strains MG1655 and W3110.</title>
        <authorList>
            <person name="Hayashi K."/>
            <person name="Morooka N."/>
            <person name="Yamamoto Y."/>
            <person name="Fujita K."/>
            <person name="Isono K."/>
            <person name="Choi S."/>
            <person name="Ohtsubo E."/>
            <person name="Baba T."/>
            <person name="Wanner B.L."/>
            <person name="Mori H."/>
            <person name="Horiuchi T."/>
        </authorList>
    </citation>
    <scope>NUCLEOTIDE SEQUENCE [LARGE SCALE GENOMIC DNA]</scope>
    <source>
        <strain>K12 / W3110 / ATCC 27325 / DSM 5911</strain>
    </source>
</reference>
<reference key="5">
    <citation type="journal article" date="1978" name="FEBS Lett.">
        <title>Primary structures of two homologous ribosome-associated DNA-binding proteins of Escherichia coli.</title>
        <authorList>
            <person name="Mende L."/>
            <person name="Timm B."/>
            <person name="Subramanian A.R."/>
        </authorList>
    </citation>
    <scope>PROTEIN SEQUENCE</scope>
</reference>
<reference key="6">
    <citation type="journal article" date="1980" name="Eur. J. Biochem.">
        <title>Complete amino-acid sequences of DNA-binding proteins HU-1 and HU-2 from Escherichia coli.</title>
        <authorList>
            <person name="Laine B."/>
            <person name="Kmiecik D."/>
            <person name="Sautiere P."/>
            <person name="Biserte G."/>
            <person name="Cohen-Solal M."/>
        </authorList>
    </citation>
    <scope>PROTEIN SEQUENCE</scope>
</reference>
<reference key="7">
    <citation type="journal article" date="1978" name="FEBS Lett.">
        <title>The amino- and carboxy-terminal amino acid sequences of protein HU from Escherichia coli.</title>
        <authorList>
            <person name="Laine B."/>
            <person name="Sautiere P."/>
            <person name="Biserte G."/>
            <person name="Cohen-Solal M."/>
            <person name="Gros F."/>
            <person name="Rouviere-Yaniv J."/>
        </authorList>
    </citation>
    <scope>PROTEIN SEQUENCE OF 1-37 AND 80-90</scope>
</reference>
<reference key="8">
    <citation type="journal article" date="1990" name="J. Mol. Biol.">
        <title>Promoters and autogenous control of the Escherichia coli hupA and hupB genes.</title>
        <authorList>
            <person name="Kohno K."/>
            <person name="Wada M."/>
            <person name="Kano Y."/>
            <person name="Imamoto F."/>
        </authorList>
    </citation>
    <scope>NUCLEOTIDE SEQUENCE [GENOMIC DNA] OF 1-23</scope>
</reference>
<reference key="9">
    <citation type="submission" date="1996-01" db="EMBL/GenBank/DDBJ databases">
        <authorList>
            <person name="Hatada E."/>
            <person name="Ohmori H."/>
            <person name="Qiao Y."/>
            <person name="Tsuji M."/>
            <person name="Fukuda R."/>
        </authorList>
    </citation>
    <scope>NUCLEOTIDE SEQUENCE [GENOMIC DNA] OF 37-90</scope>
    <source>
        <strain>K12 / W3110 / ATCC 27325 / DSM 5911</strain>
    </source>
</reference>
<reference key="10">
    <citation type="journal article" date="1997" name="Electrophoresis">
        <title>Comparing the predicted and observed properties of proteins encoded in the genome of Escherichia coli K-12.</title>
        <authorList>
            <person name="Link A.J."/>
            <person name="Robison K."/>
            <person name="Church G.M."/>
        </authorList>
    </citation>
    <scope>PROTEIN SEQUENCE OF 1-12</scope>
    <source>
        <strain>K12 / EMG2</strain>
    </source>
</reference>
<reference key="11">
    <citation type="journal article" date="1998" name="FEMS Microbiol. Lett.">
        <title>Small genes/gene-products in Escherichia coli K-12.</title>
        <authorList>
            <person name="Wasinger V.C."/>
            <person name="Humphery-Smith I."/>
        </authorList>
    </citation>
    <scope>PROTEIN SEQUENCE OF 1-10</scope>
    <source>
        <strain>K12</strain>
    </source>
</reference>
<reference key="12">
    <citation type="journal article" date="1979" name="FEBS Lett.">
        <title>Native Escherichia coli HU protein is a heterotypic dimer.</title>
        <authorList>
            <person name="Rouviere-Yaniv J."/>
            <person name="Kjeldgaard N.O."/>
        </authorList>
    </citation>
    <scope>SUBUNIT</scope>
    <source>
        <strain>K12 / W3350 / ATCC 27020</strain>
    </source>
</reference>
<reference key="13">
    <citation type="journal article" date="1990" name="Gene">
        <title>HU-1 mutants of Escherichia coli deficient in DNA binding.</title>
        <authorList>
            <person name="Goshima N."/>
            <person name="Kohno K."/>
            <person name="Imamoto F."/>
            <person name="Kano Y."/>
        </authorList>
    </citation>
    <scope>MUTAGENESIS OF ALA-30; LYS-37; PHE-47 AND 58-ARG--ARG-61</scope>
</reference>
<reference key="14">
    <citation type="journal article" date="1997" name="Electrophoresis">
        <title>Escherichia coli proteome analysis using the gene-protein database.</title>
        <authorList>
            <person name="VanBogelen R.A."/>
            <person name="Abshire K.Z."/>
            <person name="Moldover B."/>
            <person name="Olson E.R."/>
            <person name="Neidhardt F.C."/>
        </authorList>
    </citation>
    <scope>IDENTIFICATION BY 2D-GEL</scope>
</reference>
<reference key="15">
    <citation type="journal article" date="2014" name="Nat. Commun.">
        <title>Targeting Mycobacterium tuberculosis nucleoid-associated protein HU with structure-based inhibitors.</title>
        <authorList>
            <person name="Bhowmick T."/>
            <person name="Ghosh S."/>
            <person name="Dixit K."/>
            <person name="Ganesan V."/>
            <person name="Ramagopal U.A."/>
            <person name="Dey D."/>
            <person name="Sarma S.P."/>
            <person name="Ramakumar S."/>
            <person name="Nagaraja V."/>
        </authorList>
    </citation>
    <scope>FUNCTION</scope>
    <scope>ACTIVITY REGULATION</scope>
    <scope>DNA-BINDING</scope>
</reference>
<name>DBHB_ECOLI</name>
<gene>
    <name type="primary">hupB</name>
    <name type="synonym">hopD</name>
    <name type="ordered locus">b0440</name>
    <name type="ordered locus">JW0430</name>
</gene>
<accession>P0ACF4</accession>
<accession>P02341</accession>
<accession>Q2MBY6</accession>